<organism>
    <name type="scientific">Escherichia phage T7</name>
    <name type="common">Bacteriophage T7</name>
    <dbReference type="NCBI Taxonomy" id="10760"/>
    <lineage>
        <taxon>Viruses</taxon>
        <taxon>Duplodnaviria</taxon>
        <taxon>Heunggongvirae</taxon>
        <taxon>Uroviricota</taxon>
        <taxon>Caudoviricetes</taxon>
        <taxon>Autographiviridae</taxon>
        <taxon>Studiervirinae</taxon>
        <taxon>Teseptimavirus</taxon>
        <taxon>Teseptimavirus T7</taxon>
    </lineage>
</organism>
<organismHost>
    <name type="scientific">Escherichia coli</name>
    <dbReference type="NCBI Taxonomy" id="562"/>
</organismHost>
<gene>
    <name type="ordered locus">19.5</name>
</gene>
<keyword id="KW-1185">Reference proteome</keyword>
<keyword id="KW-0732">Signal</keyword>
<protein>
    <recommendedName>
        <fullName>Protein 19.5</fullName>
    </recommendedName>
    <alternativeName>
        <fullName>Gene product 19.5</fullName>
        <shortName>Gp19.5</shortName>
    </alternativeName>
</protein>
<name>Y195_BPT7</name>
<feature type="signal peptide" evidence="1">
    <location>
        <begin position="1"/>
        <end position="23"/>
    </location>
</feature>
<feature type="chain" id="PRO_0000106547" description="Protein 19.5">
    <location>
        <begin position="24"/>
        <end position="49"/>
    </location>
</feature>
<evidence type="ECO:0000255" key="1"/>
<accession>P03804</accession>
<dbReference type="EMBL" id="V01146">
    <property type="protein sequence ID" value="CAA24443.1"/>
    <property type="molecule type" value="Genomic_DNA"/>
</dbReference>
<dbReference type="PIR" id="A04429">
    <property type="entry name" value="Q9BPE7"/>
</dbReference>
<dbReference type="RefSeq" id="NP_042013.1">
    <property type="nucleotide sequence ID" value="NC_001604.1"/>
</dbReference>
<dbReference type="SMR" id="P03804"/>
<dbReference type="KEGG" id="vg:1261068"/>
<dbReference type="OrthoDB" id="26400at10239"/>
<dbReference type="Proteomes" id="UP000000840">
    <property type="component" value="Genome"/>
</dbReference>
<dbReference type="InterPro" id="IPR035581">
    <property type="entry name" value="DUF5465"/>
</dbReference>
<dbReference type="NCBIfam" id="NF040465">
    <property type="entry name" value="T7_gp19.5"/>
    <property type="match status" value="1"/>
</dbReference>
<dbReference type="Pfam" id="PF17553">
    <property type="entry name" value="DUF5465"/>
    <property type="match status" value="1"/>
</dbReference>
<proteinExistence type="inferred from homology"/>
<reference key="1">
    <citation type="journal article" date="1983" name="J. Mol. Biol.">
        <title>Complete nucleotide sequence of bacteriophage T7 DNA and the locations of T7 genetic elements.</title>
        <authorList>
            <person name="Dunn J.J."/>
            <person name="Studier F.W."/>
        </authorList>
    </citation>
    <scope>NUCLEOTIDE SEQUENCE [LARGE SCALE GENOMIC DNA]</scope>
</reference>
<sequence length="49" mass="5434">MFRLLLNLLRHRVTYRFLVVLCAALGYASLTGDLSSLESVVCSILTCSD</sequence>